<accession>Q6D280</accession>
<name>DER_PECAS</name>
<evidence type="ECO:0000255" key="1">
    <source>
        <dbReference type="HAMAP-Rule" id="MF_00195"/>
    </source>
</evidence>
<protein>
    <recommendedName>
        <fullName evidence="1">GTPase Der</fullName>
    </recommendedName>
    <alternativeName>
        <fullName evidence="1">GTP-binding protein EngA</fullName>
    </alternativeName>
</protein>
<comment type="function">
    <text evidence="1">GTPase that plays an essential role in the late steps of ribosome biogenesis.</text>
</comment>
<comment type="subunit">
    <text evidence="1">Associates with the 50S ribosomal subunit.</text>
</comment>
<comment type="similarity">
    <text evidence="1">Belongs to the TRAFAC class TrmE-Era-EngA-EngB-Septin-like GTPase superfamily. EngA (Der) GTPase family.</text>
</comment>
<keyword id="KW-0342">GTP-binding</keyword>
<keyword id="KW-0547">Nucleotide-binding</keyword>
<keyword id="KW-1185">Reference proteome</keyword>
<keyword id="KW-0677">Repeat</keyword>
<keyword id="KW-0690">Ribosome biogenesis</keyword>
<proteinExistence type="inferred from homology"/>
<sequence>MIPVVALVGRPNVGKSTLFNRLTRTRDALVADFPGLTRDRKYGRAEVEGHEFIIIDTGGIDGTEDGVETRMAGQSLVAIEEADIVLFMVDARAGLMPADEGIAKHLRSREKMTVLVANKTDGLDPDMVTADFYSLGMGEVYAIAASHGRGVTSLLETVLLPFVQDEIEEPVELTEEEENAAYWAALEAEEQASEEEAEDDFNPEDLPIKLAIVGRPNVGKSTLTNRILGEERVVVYDMPGTTRDSIYIPMVRDEREYILIDTAGVRKRGKVTETVEKFSVIKTLQAIEDANVVLLVIDAREGISDQDLSLLGFILNSGRSLVIVMNKWDGLSQEVRDQVKDTLDLRLGFIDFARIHFISALHGSGVGNLFESVTEAYSCATRRVSTAMLTRIMQMASDDHQPPLVRGRRVKLKYAHAGGYNPPIVVIHGNQVKDLPDSYKRYLMNYYRRSLEVMGTPIRIQFKEGENPFAEKRNKLTPTQLRKRKRLMSHLKKSK</sequence>
<organism>
    <name type="scientific">Pectobacterium atrosepticum (strain SCRI 1043 / ATCC BAA-672)</name>
    <name type="common">Erwinia carotovora subsp. atroseptica</name>
    <dbReference type="NCBI Taxonomy" id="218491"/>
    <lineage>
        <taxon>Bacteria</taxon>
        <taxon>Pseudomonadati</taxon>
        <taxon>Pseudomonadota</taxon>
        <taxon>Gammaproteobacteria</taxon>
        <taxon>Enterobacterales</taxon>
        <taxon>Pectobacteriaceae</taxon>
        <taxon>Pectobacterium</taxon>
    </lineage>
</organism>
<feature type="chain" id="PRO_1000011621" description="GTPase Der">
    <location>
        <begin position="1"/>
        <end position="495"/>
    </location>
</feature>
<feature type="domain" description="EngA-type G 1">
    <location>
        <begin position="3"/>
        <end position="166"/>
    </location>
</feature>
<feature type="domain" description="EngA-type G 2">
    <location>
        <begin position="208"/>
        <end position="381"/>
    </location>
</feature>
<feature type="domain" description="KH-like" evidence="1">
    <location>
        <begin position="382"/>
        <end position="466"/>
    </location>
</feature>
<feature type="binding site" evidence="1">
    <location>
        <begin position="9"/>
        <end position="16"/>
    </location>
    <ligand>
        <name>GTP</name>
        <dbReference type="ChEBI" id="CHEBI:37565"/>
        <label>1</label>
    </ligand>
</feature>
<feature type="binding site" evidence="1">
    <location>
        <begin position="56"/>
        <end position="60"/>
    </location>
    <ligand>
        <name>GTP</name>
        <dbReference type="ChEBI" id="CHEBI:37565"/>
        <label>1</label>
    </ligand>
</feature>
<feature type="binding site" evidence="1">
    <location>
        <begin position="118"/>
        <end position="121"/>
    </location>
    <ligand>
        <name>GTP</name>
        <dbReference type="ChEBI" id="CHEBI:37565"/>
        <label>1</label>
    </ligand>
</feature>
<feature type="binding site" evidence="1">
    <location>
        <begin position="214"/>
        <end position="221"/>
    </location>
    <ligand>
        <name>GTP</name>
        <dbReference type="ChEBI" id="CHEBI:37565"/>
        <label>2</label>
    </ligand>
</feature>
<feature type="binding site" evidence="1">
    <location>
        <begin position="261"/>
        <end position="265"/>
    </location>
    <ligand>
        <name>GTP</name>
        <dbReference type="ChEBI" id="CHEBI:37565"/>
        <label>2</label>
    </ligand>
</feature>
<feature type="binding site" evidence="1">
    <location>
        <begin position="326"/>
        <end position="329"/>
    </location>
    <ligand>
        <name>GTP</name>
        <dbReference type="ChEBI" id="CHEBI:37565"/>
        <label>2</label>
    </ligand>
</feature>
<reference key="1">
    <citation type="journal article" date="2004" name="Proc. Natl. Acad. Sci. U.S.A.">
        <title>Genome sequence of the enterobacterial phytopathogen Erwinia carotovora subsp. atroseptica and characterization of virulence factors.</title>
        <authorList>
            <person name="Bell K.S."/>
            <person name="Sebaihia M."/>
            <person name="Pritchard L."/>
            <person name="Holden M.T.G."/>
            <person name="Hyman L.J."/>
            <person name="Holeva M.C."/>
            <person name="Thomson N.R."/>
            <person name="Bentley S.D."/>
            <person name="Churcher L.J.C."/>
            <person name="Mungall K."/>
            <person name="Atkin R."/>
            <person name="Bason N."/>
            <person name="Brooks K."/>
            <person name="Chillingworth T."/>
            <person name="Clark K."/>
            <person name="Doggett J."/>
            <person name="Fraser A."/>
            <person name="Hance Z."/>
            <person name="Hauser H."/>
            <person name="Jagels K."/>
            <person name="Moule S."/>
            <person name="Norbertczak H."/>
            <person name="Ormond D."/>
            <person name="Price C."/>
            <person name="Quail M.A."/>
            <person name="Sanders M."/>
            <person name="Walker D."/>
            <person name="Whitehead S."/>
            <person name="Salmond G.P.C."/>
            <person name="Birch P.R.J."/>
            <person name="Parkhill J."/>
            <person name="Toth I.K."/>
        </authorList>
    </citation>
    <scope>NUCLEOTIDE SEQUENCE [LARGE SCALE GENOMIC DNA]</scope>
    <source>
        <strain>SCRI 1043 / ATCC BAA-672</strain>
    </source>
</reference>
<gene>
    <name evidence="1" type="primary">der</name>
    <name type="synonym">engA</name>
    <name type="ordered locus">ECA3216</name>
</gene>
<dbReference type="EMBL" id="BX950851">
    <property type="protein sequence ID" value="CAG76114.1"/>
    <property type="molecule type" value="Genomic_DNA"/>
</dbReference>
<dbReference type="RefSeq" id="WP_011094737.1">
    <property type="nucleotide sequence ID" value="NC_004547.2"/>
</dbReference>
<dbReference type="SMR" id="Q6D280"/>
<dbReference type="STRING" id="218491.ECA3216"/>
<dbReference type="GeneID" id="57209900"/>
<dbReference type="KEGG" id="eca:ECA3216"/>
<dbReference type="PATRIC" id="fig|218491.5.peg.3258"/>
<dbReference type="eggNOG" id="COG1160">
    <property type="taxonomic scope" value="Bacteria"/>
</dbReference>
<dbReference type="HOGENOM" id="CLU_016077_6_2_6"/>
<dbReference type="OrthoDB" id="9805918at2"/>
<dbReference type="Proteomes" id="UP000007966">
    <property type="component" value="Chromosome"/>
</dbReference>
<dbReference type="GO" id="GO:0005525">
    <property type="term" value="F:GTP binding"/>
    <property type="evidence" value="ECO:0007669"/>
    <property type="project" value="UniProtKB-UniRule"/>
</dbReference>
<dbReference type="GO" id="GO:0043022">
    <property type="term" value="F:ribosome binding"/>
    <property type="evidence" value="ECO:0007669"/>
    <property type="project" value="TreeGrafter"/>
</dbReference>
<dbReference type="GO" id="GO:0042254">
    <property type="term" value="P:ribosome biogenesis"/>
    <property type="evidence" value="ECO:0007669"/>
    <property type="project" value="UniProtKB-KW"/>
</dbReference>
<dbReference type="CDD" id="cd01894">
    <property type="entry name" value="EngA1"/>
    <property type="match status" value="1"/>
</dbReference>
<dbReference type="CDD" id="cd01895">
    <property type="entry name" value="EngA2"/>
    <property type="match status" value="1"/>
</dbReference>
<dbReference type="FunFam" id="3.30.300.20:FF:000004">
    <property type="entry name" value="GTPase Der"/>
    <property type="match status" value="1"/>
</dbReference>
<dbReference type="FunFam" id="3.40.50.300:FF:000040">
    <property type="entry name" value="GTPase Der"/>
    <property type="match status" value="1"/>
</dbReference>
<dbReference type="FunFam" id="3.40.50.300:FF:000057">
    <property type="entry name" value="GTPase Der"/>
    <property type="match status" value="1"/>
</dbReference>
<dbReference type="Gene3D" id="3.30.300.20">
    <property type="match status" value="1"/>
</dbReference>
<dbReference type="Gene3D" id="3.40.50.300">
    <property type="entry name" value="P-loop containing nucleotide triphosphate hydrolases"/>
    <property type="match status" value="2"/>
</dbReference>
<dbReference type="HAMAP" id="MF_00195">
    <property type="entry name" value="GTPase_Der"/>
    <property type="match status" value="1"/>
</dbReference>
<dbReference type="InterPro" id="IPR031166">
    <property type="entry name" value="G_ENGA"/>
</dbReference>
<dbReference type="InterPro" id="IPR006073">
    <property type="entry name" value="GTP-bd"/>
</dbReference>
<dbReference type="InterPro" id="IPR016484">
    <property type="entry name" value="GTPase_Der"/>
</dbReference>
<dbReference type="InterPro" id="IPR032859">
    <property type="entry name" value="KH_dom-like"/>
</dbReference>
<dbReference type="InterPro" id="IPR015946">
    <property type="entry name" value="KH_dom-like_a/b"/>
</dbReference>
<dbReference type="InterPro" id="IPR027417">
    <property type="entry name" value="P-loop_NTPase"/>
</dbReference>
<dbReference type="InterPro" id="IPR005225">
    <property type="entry name" value="Small_GTP-bd"/>
</dbReference>
<dbReference type="NCBIfam" id="TIGR03594">
    <property type="entry name" value="GTPase_EngA"/>
    <property type="match status" value="1"/>
</dbReference>
<dbReference type="NCBIfam" id="TIGR00231">
    <property type="entry name" value="small_GTP"/>
    <property type="match status" value="2"/>
</dbReference>
<dbReference type="PANTHER" id="PTHR43834">
    <property type="entry name" value="GTPASE DER"/>
    <property type="match status" value="1"/>
</dbReference>
<dbReference type="PANTHER" id="PTHR43834:SF6">
    <property type="entry name" value="GTPASE DER"/>
    <property type="match status" value="1"/>
</dbReference>
<dbReference type="Pfam" id="PF14714">
    <property type="entry name" value="KH_dom-like"/>
    <property type="match status" value="1"/>
</dbReference>
<dbReference type="Pfam" id="PF01926">
    <property type="entry name" value="MMR_HSR1"/>
    <property type="match status" value="2"/>
</dbReference>
<dbReference type="PIRSF" id="PIRSF006485">
    <property type="entry name" value="GTP-binding_EngA"/>
    <property type="match status" value="1"/>
</dbReference>
<dbReference type="PRINTS" id="PR00326">
    <property type="entry name" value="GTP1OBG"/>
</dbReference>
<dbReference type="SUPFAM" id="SSF52540">
    <property type="entry name" value="P-loop containing nucleoside triphosphate hydrolases"/>
    <property type="match status" value="2"/>
</dbReference>
<dbReference type="PROSITE" id="PS51712">
    <property type="entry name" value="G_ENGA"/>
    <property type="match status" value="2"/>
</dbReference>